<reference key="1">
    <citation type="journal article" date="2004" name="Science">
        <title>A predator unmasked: life cycle of Bdellovibrio bacteriovorus from a genomic perspective.</title>
        <authorList>
            <person name="Rendulic S."/>
            <person name="Jagtap P."/>
            <person name="Rosinus A."/>
            <person name="Eppinger M."/>
            <person name="Baar C."/>
            <person name="Lanz C."/>
            <person name="Keller H."/>
            <person name="Lambert C."/>
            <person name="Evans K.J."/>
            <person name="Goesmann A."/>
            <person name="Meyer F."/>
            <person name="Sockett R.E."/>
            <person name="Schuster S.C."/>
        </authorList>
    </citation>
    <scope>NUCLEOTIDE SEQUENCE [LARGE SCALE GENOMIC DNA]</scope>
    <source>
        <strain>ATCC 15356 / DSM 50701 / NCIMB 9529 / HD100</strain>
    </source>
</reference>
<feature type="chain" id="PRO_0000170502" description="Guanylate kinase">
    <location>
        <begin position="1"/>
        <end position="185"/>
    </location>
</feature>
<feature type="domain" description="Guanylate kinase-like" evidence="1">
    <location>
        <begin position="3"/>
        <end position="181"/>
    </location>
</feature>
<feature type="binding site" evidence="1">
    <location>
        <begin position="10"/>
        <end position="17"/>
    </location>
    <ligand>
        <name>ATP</name>
        <dbReference type="ChEBI" id="CHEBI:30616"/>
    </ligand>
</feature>
<evidence type="ECO:0000255" key="1">
    <source>
        <dbReference type="HAMAP-Rule" id="MF_00328"/>
    </source>
</evidence>
<evidence type="ECO:0000305" key="2"/>
<dbReference type="EC" id="2.7.4.8" evidence="1"/>
<dbReference type="EMBL" id="BX842650">
    <property type="protein sequence ID" value="CAE79446.1"/>
    <property type="status" value="ALT_INIT"/>
    <property type="molecule type" value="Genomic_DNA"/>
</dbReference>
<dbReference type="RefSeq" id="WP_038448884.1">
    <property type="nucleotide sequence ID" value="NC_005363.1"/>
</dbReference>
<dbReference type="SMR" id="P60549"/>
<dbReference type="STRING" id="264462.Bd1568"/>
<dbReference type="GeneID" id="93012563"/>
<dbReference type="KEGG" id="bba:Bd1568"/>
<dbReference type="eggNOG" id="COG0194">
    <property type="taxonomic scope" value="Bacteria"/>
</dbReference>
<dbReference type="HOGENOM" id="CLU_001715_1_1_7"/>
<dbReference type="Proteomes" id="UP000008080">
    <property type="component" value="Chromosome"/>
</dbReference>
<dbReference type="GO" id="GO:0005829">
    <property type="term" value="C:cytosol"/>
    <property type="evidence" value="ECO:0007669"/>
    <property type="project" value="TreeGrafter"/>
</dbReference>
<dbReference type="GO" id="GO:0005524">
    <property type="term" value="F:ATP binding"/>
    <property type="evidence" value="ECO:0007669"/>
    <property type="project" value="UniProtKB-UniRule"/>
</dbReference>
<dbReference type="GO" id="GO:0004385">
    <property type="term" value="F:guanylate kinase activity"/>
    <property type="evidence" value="ECO:0007669"/>
    <property type="project" value="UniProtKB-UniRule"/>
</dbReference>
<dbReference type="CDD" id="cd00071">
    <property type="entry name" value="GMPK"/>
    <property type="match status" value="1"/>
</dbReference>
<dbReference type="FunFam" id="3.30.63.10:FF:000002">
    <property type="entry name" value="Guanylate kinase 1"/>
    <property type="match status" value="1"/>
</dbReference>
<dbReference type="Gene3D" id="3.30.63.10">
    <property type="entry name" value="Guanylate Kinase phosphate binding domain"/>
    <property type="match status" value="1"/>
</dbReference>
<dbReference type="Gene3D" id="3.40.50.300">
    <property type="entry name" value="P-loop containing nucleotide triphosphate hydrolases"/>
    <property type="match status" value="1"/>
</dbReference>
<dbReference type="HAMAP" id="MF_00328">
    <property type="entry name" value="Guanylate_kinase"/>
    <property type="match status" value="1"/>
</dbReference>
<dbReference type="InterPro" id="IPR008145">
    <property type="entry name" value="GK/Ca_channel_bsu"/>
</dbReference>
<dbReference type="InterPro" id="IPR008144">
    <property type="entry name" value="Guanylate_kin-like_dom"/>
</dbReference>
<dbReference type="InterPro" id="IPR017665">
    <property type="entry name" value="Guanylate_kinase"/>
</dbReference>
<dbReference type="InterPro" id="IPR020590">
    <property type="entry name" value="Guanylate_kinase_CS"/>
</dbReference>
<dbReference type="InterPro" id="IPR027417">
    <property type="entry name" value="P-loop_NTPase"/>
</dbReference>
<dbReference type="NCBIfam" id="TIGR03263">
    <property type="entry name" value="guanyl_kin"/>
    <property type="match status" value="1"/>
</dbReference>
<dbReference type="PANTHER" id="PTHR23117:SF13">
    <property type="entry name" value="GUANYLATE KINASE"/>
    <property type="match status" value="1"/>
</dbReference>
<dbReference type="PANTHER" id="PTHR23117">
    <property type="entry name" value="GUANYLATE KINASE-RELATED"/>
    <property type="match status" value="1"/>
</dbReference>
<dbReference type="Pfam" id="PF00625">
    <property type="entry name" value="Guanylate_kin"/>
    <property type="match status" value="1"/>
</dbReference>
<dbReference type="SMART" id="SM00072">
    <property type="entry name" value="GuKc"/>
    <property type="match status" value="1"/>
</dbReference>
<dbReference type="SUPFAM" id="SSF52540">
    <property type="entry name" value="P-loop containing nucleoside triphosphate hydrolases"/>
    <property type="match status" value="1"/>
</dbReference>
<dbReference type="PROSITE" id="PS00856">
    <property type="entry name" value="GUANYLATE_KINASE_1"/>
    <property type="match status" value="1"/>
</dbReference>
<dbReference type="PROSITE" id="PS50052">
    <property type="entry name" value="GUANYLATE_KINASE_2"/>
    <property type="match status" value="1"/>
</dbReference>
<protein>
    <recommendedName>
        <fullName evidence="1">Guanylate kinase</fullName>
        <ecNumber evidence="1">2.7.4.8</ecNumber>
    </recommendedName>
    <alternativeName>
        <fullName evidence="1">GMP kinase</fullName>
    </alternativeName>
</protein>
<gene>
    <name evidence="1" type="primary">gmk</name>
    <name type="ordered locus">Bd1568</name>
</gene>
<accession>P60549</accession>
<sequence>MKTRMIIVAAPSGAGKSSFVERITREDSRLVDIVTFTTRSIRQGETPGLQYNFIDHADFEQKIKEGFFVEWAKVHTNFYGTSYSSLETAWNQGKTAIMDIDIQGVATFKSKFPDAKTVFIHPPSIDELRRRIEKRDGKVPADIEVRMANAEKEIREASKFDYQIVNDVFEKSYGEFKKIVEDLLA</sequence>
<proteinExistence type="inferred from homology"/>
<keyword id="KW-0067">ATP-binding</keyword>
<keyword id="KW-0963">Cytoplasm</keyword>
<keyword id="KW-0418">Kinase</keyword>
<keyword id="KW-0547">Nucleotide-binding</keyword>
<keyword id="KW-1185">Reference proteome</keyword>
<keyword id="KW-0808">Transferase</keyword>
<comment type="function">
    <text evidence="1">Essential for recycling GMP and indirectly, cGMP.</text>
</comment>
<comment type="catalytic activity">
    <reaction evidence="1">
        <text>GMP + ATP = GDP + ADP</text>
        <dbReference type="Rhea" id="RHEA:20780"/>
        <dbReference type="ChEBI" id="CHEBI:30616"/>
        <dbReference type="ChEBI" id="CHEBI:58115"/>
        <dbReference type="ChEBI" id="CHEBI:58189"/>
        <dbReference type="ChEBI" id="CHEBI:456216"/>
        <dbReference type="EC" id="2.7.4.8"/>
    </reaction>
</comment>
<comment type="subcellular location">
    <subcellularLocation>
        <location evidence="1">Cytoplasm</location>
    </subcellularLocation>
</comment>
<comment type="similarity">
    <text evidence="1">Belongs to the guanylate kinase family.</text>
</comment>
<comment type="sequence caution" evidence="2">
    <conflict type="erroneous initiation">
        <sequence resource="EMBL-CDS" id="CAE79446"/>
    </conflict>
</comment>
<organism>
    <name type="scientific">Bdellovibrio bacteriovorus (strain ATCC 15356 / DSM 50701 / NCIMB 9529 / HD100)</name>
    <dbReference type="NCBI Taxonomy" id="264462"/>
    <lineage>
        <taxon>Bacteria</taxon>
        <taxon>Pseudomonadati</taxon>
        <taxon>Bdellovibrionota</taxon>
        <taxon>Bdellovibrionia</taxon>
        <taxon>Bdellovibrionales</taxon>
        <taxon>Pseudobdellovibrionaceae</taxon>
        <taxon>Bdellovibrio</taxon>
    </lineage>
</organism>
<name>KGUA_BDEBA</name>